<reference key="1">
    <citation type="journal article" date="2011" name="J. Bacteriol.">
        <title>Comparative genomics of 28 Salmonella enterica isolates: evidence for CRISPR-mediated adaptive sublineage evolution.</title>
        <authorList>
            <person name="Fricke W.F."/>
            <person name="Mammel M.K."/>
            <person name="McDermott P.F."/>
            <person name="Tartera C."/>
            <person name="White D.G."/>
            <person name="Leclerc J.E."/>
            <person name="Ravel J."/>
            <person name="Cebula T.A."/>
        </authorList>
    </citation>
    <scope>NUCLEOTIDE SEQUENCE [LARGE SCALE GENOMIC DNA]</scope>
    <source>
        <strain>SL254</strain>
    </source>
</reference>
<keyword id="KW-0456">Lyase</keyword>
<keyword id="KW-0460">Magnesium</keyword>
<keyword id="KW-0479">Metal-binding</keyword>
<name>RHMA_SALNS</name>
<feature type="chain" id="PRO_1000140401" description="2-keto-3-deoxy-L-rhamnonate aldolase">
    <location>
        <begin position="1"/>
        <end position="267"/>
    </location>
</feature>
<feature type="active site" description="Proton acceptor" evidence="1">
    <location>
        <position position="49"/>
    </location>
</feature>
<feature type="binding site" evidence="1">
    <location>
        <position position="151"/>
    </location>
    <ligand>
        <name>substrate</name>
    </ligand>
</feature>
<feature type="binding site" evidence="1">
    <location>
        <position position="153"/>
    </location>
    <ligand>
        <name>Mg(2+)</name>
        <dbReference type="ChEBI" id="CHEBI:18420"/>
    </ligand>
</feature>
<feature type="binding site" evidence="1">
    <location>
        <position position="178"/>
    </location>
    <ligand>
        <name>substrate</name>
    </ligand>
</feature>
<feature type="binding site" evidence="1">
    <location>
        <position position="179"/>
    </location>
    <ligand>
        <name>Mg(2+)</name>
        <dbReference type="ChEBI" id="CHEBI:18420"/>
    </ligand>
</feature>
<feature type="binding site" evidence="1">
    <location>
        <position position="179"/>
    </location>
    <ligand>
        <name>substrate</name>
    </ligand>
</feature>
<feature type="site" description="Transition state stabilizer" evidence="1">
    <location>
        <position position="74"/>
    </location>
</feature>
<feature type="site" description="Increases basicity of active site His" evidence="1">
    <location>
        <position position="88"/>
    </location>
</feature>
<accession>B4SYW1</accession>
<proteinExistence type="inferred from homology"/>
<dbReference type="EC" id="4.1.2.53" evidence="1"/>
<dbReference type="EMBL" id="CP001113">
    <property type="protein sequence ID" value="ACF62665.1"/>
    <property type="molecule type" value="Genomic_DNA"/>
</dbReference>
<dbReference type="SMR" id="B4SYW1"/>
<dbReference type="KEGG" id="see:SNSL254_A2474"/>
<dbReference type="HOGENOM" id="CLU_059964_1_0_6"/>
<dbReference type="Proteomes" id="UP000008824">
    <property type="component" value="Chromosome"/>
</dbReference>
<dbReference type="GO" id="GO:0005737">
    <property type="term" value="C:cytoplasm"/>
    <property type="evidence" value="ECO:0007669"/>
    <property type="project" value="TreeGrafter"/>
</dbReference>
<dbReference type="GO" id="GO:0106099">
    <property type="term" value="F:2-keto-3-deoxy-L-rhamnonate aldolase activity"/>
    <property type="evidence" value="ECO:0007669"/>
    <property type="project" value="UniProtKB-EC"/>
</dbReference>
<dbReference type="GO" id="GO:0000287">
    <property type="term" value="F:magnesium ion binding"/>
    <property type="evidence" value="ECO:0007669"/>
    <property type="project" value="UniProtKB-UniRule"/>
</dbReference>
<dbReference type="FunFam" id="3.20.20.60:FF:000004">
    <property type="entry name" value="5-keto-4-deoxy-D-glucarate aldolase"/>
    <property type="match status" value="1"/>
</dbReference>
<dbReference type="Gene3D" id="3.20.20.60">
    <property type="entry name" value="Phosphoenolpyruvate-binding domains"/>
    <property type="match status" value="1"/>
</dbReference>
<dbReference type="HAMAP" id="MF_01290">
    <property type="entry name" value="KDR_aldolase"/>
    <property type="match status" value="1"/>
</dbReference>
<dbReference type="InterPro" id="IPR005000">
    <property type="entry name" value="Aldolase/citrate-lyase_domain"/>
</dbReference>
<dbReference type="InterPro" id="IPR050251">
    <property type="entry name" value="HpcH-HpaI_aldolase"/>
</dbReference>
<dbReference type="InterPro" id="IPR023593">
    <property type="entry name" value="KDR_aldolase"/>
</dbReference>
<dbReference type="InterPro" id="IPR015813">
    <property type="entry name" value="Pyrv/PenolPyrv_kinase-like_dom"/>
</dbReference>
<dbReference type="InterPro" id="IPR040442">
    <property type="entry name" value="Pyrv_kinase-like_dom_sf"/>
</dbReference>
<dbReference type="NCBIfam" id="NF007521">
    <property type="entry name" value="PRK10128.1"/>
    <property type="match status" value="1"/>
</dbReference>
<dbReference type="PANTHER" id="PTHR30502">
    <property type="entry name" value="2-KETO-3-DEOXY-L-RHAMNONATE ALDOLASE"/>
    <property type="match status" value="1"/>
</dbReference>
<dbReference type="PANTHER" id="PTHR30502:SF5">
    <property type="entry name" value="2-KETO-3-DEOXY-L-RHAMNONATE ALDOLASE"/>
    <property type="match status" value="1"/>
</dbReference>
<dbReference type="Pfam" id="PF03328">
    <property type="entry name" value="HpcH_HpaI"/>
    <property type="match status" value="1"/>
</dbReference>
<dbReference type="SUPFAM" id="SSF51621">
    <property type="entry name" value="Phosphoenolpyruvate/pyruvate domain"/>
    <property type="match status" value="1"/>
</dbReference>
<protein>
    <recommendedName>
        <fullName evidence="1">2-keto-3-deoxy-L-rhamnonate aldolase</fullName>
        <shortName evidence="1">KDR aldolase</shortName>
        <ecNumber evidence="1">4.1.2.53</ecNumber>
    </recommendedName>
    <alternativeName>
        <fullName evidence="1">2-dehydro-3-deoxyrhamnonate aldolase</fullName>
    </alternativeName>
</protein>
<sequence>MNALLSNPFKEGLRKGDTQIGLWLSSTTSYMAEIAATSGYDWLLIDGEHAPNTVQDLYHQLQAIAPYASQPVIRPIEGSKALIKQVLDIGAQTLLIPMVDTAEQARQVVSATRYPPLGQRGVGASVARAARWGRIDNYMAQANESLCLLVQVESKVALENLDAILEVEGIDGVFIGPADLSASLGYPDNAGHPEVQRIIESCIYRIRAAGKAAGFLAVDPAMAQKCLAWGANFVAVGVDTMLYTEALDSRLAMFKSVQSVSTAKRSY</sequence>
<organism>
    <name type="scientific">Salmonella newport (strain SL254)</name>
    <dbReference type="NCBI Taxonomy" id="423368"/>
    <lineage>
        <taxon>Bacteria</taxon>
        <taxon>Pseudomonadati</taxon>
        <taxon>Pseudomonadota</taxon>
        <taxon>Gammaproteobacteria</taxon>
        <taxon>Enterobacterales</taxon>
        <taxon>Enterobacteriaceae</taxon>
        <taxon>Salmonella</taxon>
    </lineage>
</organism>
<comment type="function">
    <text evidence="1">Catalyzes the reversible retro-aldol cleavage of 2-keto-3-deoxy-L-rhamnonate (KDR) to pyruvate and lactaldehyde.</text>
</comment>
<comment type="catalytic activity">
    <reaction evidence="1">
        <text>2-dehydro-3-deoxy-L-rhamnonate = (S)-lactaldehyde + pyruvate</text>
        <dbReference type="Rhea" id="RHEA:25784"/>
        <dbReference type="ChEBI" id="CHEBI:15361"/>
        <dbReference type="ChEBI" id="CHEBI:18041"/>
        <dbReference type="ChEBI" id="CHEBI:58371"/>
        <dbReference type="EC" id="4.1.2.53"/>
    </reaction>
</comment>
<comment type="cofactor">
    <cofactor evidence="1">
        <name>Mg(2+)</name>
        <dbReference type="ChEBI" id="CHEBI:18420"/>
    </cofactor>
    <text evidence="1">Binds 1 Mg(2+) ion per subunit.</text>
</comment>
<comment type="subunit">
    <text evidence="1">Homohexamer.</text>
</comment>
<comment type="similarity">
    <text evidence="1">Belongs to the HpcH/HpaI aldolase family. KDR aldolase subfamily.</text>
</comment>
<gene>
    <name evidence="1" type="primary">rhmA</name>
    <name type="ordered locus">SNSL254_A2474</name>
</gene>
<evidence type="ECO:0000255" key="1">
    <source>
        <dbReference type="HAMAP-Rule" id="MF_01290"/>
    </source>
</evidence>